<name>PP2C2_ASPFU</name>
<evidence type="ECO:0000250" key="1">
    <source>
        <dbReference type="UniProtKB" id="P35813"/>
    </source>
</evidence>
<evidence type="ECO:0000250" key="2">
    <source>
        <dbReference type="UniProtKB" id="P39966"/>
    </source>
</evidence>
<evidence type="ECO:0000255" key="3">
    <source>
        <dbReference type="PROSITE-ProRule" id="PRU01082"/>
    </source>
</evidence>
<evidence type="ECO:0000256" key="4">
    <source>
        <dbReference type="SAM" id="MobiDB-lite"/>
    </source>
</evidence>
<evidence type="ECO:0000269" key="5">
    <source>
    </source>
</evidence>
<evidence type="ECO:0000303" key="6">
    <source>
    </source>
</evidence>
<evidence type="ECO:0000305" key="7"/>
<evidence type="ECO:0000312" key="8">
    <source>
        <dbReference type="EMBL" id="EAL90257.1"/>
    </source>
</evidence>
<evidence type="ECO:0000312" key="9">
    <source>
        <dbReference type="Proteomes" id="UP000002530"/>
    </source>
</evidence>
<sequence length="429" mass="46591">MRTCGTSSEGQDECCLYGLSAMQGWRISMEDAHAAVLDLQAKSTGGSEKPTDPDKRLAFFGVYDGHGGDKVALFAGENVHKIVAKQEAFAKGDIEQALKDGFLATDRAILEDPKYEEEVSGCTAAVSVISKNKIWVANAGDSRSVLGVKGRAKPLSFDHKPQNEGEKARISAAGGFVDFGRVNGNLALSRAIGDFEFKKSPELSPEQQIVTAYPDVTVHEVTDDDEFLVIACDGIWDCQSSQSVVEFVRRGIAAKQELYRICENMMDNCLASNSETGGVGCDNMTMIIIGLLNGKTKEEWYNQISERVANGDGPCAPPEYGKSEFRGPGIRNQFEETPDNYDLENDRSRGFSVRSGRIILLGDGTELIPEQNDEELFDQREENRDVTNHLQHDKAEETSTAANLSESPSSANKNSSGSGTEATEKSASS</sequence>
<feature type="chain" id="PRO_0000461655" description="Protein phosphatase 2C homolog 2">
    <location>
        <begin position="1"/>
        <end position="429"/>
    </location>
</feature>
<feature type="domain" description="PPM-type phosphatase" evidence="3">
    <location>
        <begin position="16"/>
        <end position="291"/>
    </location>
</feature>
<feature type="region of interest" description="Disordered" evidence="4">
    <location>
        <begin position="320"/>
        <end position="348"/>
    </location>
</feature>
<feature type="region of interest" description="Disordered" evidence="4">
    <location>
        <begin position="384"/>
        <end position="429"/>
    </location>
</feature>
<feature type="compositionally biased region" description="Basic and acidic residues" evidence="4">
    <location>
        <begin position="384"/>
        <end position="397"/>
    </location>
</feature>
<feature type="compositionally biased region" description="Low complexity" evidence="4">
    <location>
        <begin position="405"/>
        <end position="419"/>
    </location>
</feature>
<feature type="binding site" evidence="1">
    <location>
        <position position="64"/>
    </location>
    <ligand>
        <name>Mn(2+)</name>
        <dbReference type="ChEBI" id="CHEBI:29035"/>
        <label>1</label>
    </ligand>
</feature>
<feature type="binding site" evidence="1">
    <location>
        <position position="64"/>
    </location>
    <ligand>
        <name>Mn(2+)</name>
        <dbReference type="ChEBI" id="CHEBI:29035"/>
        <label>2</label>
    </ligand>
</feature>
<feature type="binding site" evidence="1">
    <location>
        <position position="65"/>
    </location>
    <ligand>
        <name>Mn(2+)</name>
        <dbReference type="ChEBI" id="CHEBI:29035"/>
        <label>1</label>
    </ligand>
</feature>
<feature type="binding site" evidence="1">
    <location>
        <position position="233"/>
    </location>
    <ligand>
        <name>Mn(2+)</name>
        <dbReference type="ChEBI" id="CHEBI:29035"/>
        <label>2</label>
    </ligand>
</feature>
<feature type="binding site" evidence="1">
    <location>
        <position position="282"/>
    </location>
    <ligand>
        <name>Mn(2+)</name>
        <dbReference type="ChEBI" id="CHEBI:29035"/>
        <label>2</label>
    </ligand>
</feature>
<comment type="function">
    <text evidence="2 5">Dephosphorylating regulator for many key proteins (By similarity). Dephosphorylates sakA, to negatively regulate the stress-activated p38MAPK cascade (PubMed:25597841).</text>
</comment>
<comment type="catalytic activity">
    <reaction evidence="3">
        <text>O-phospho-L-seryl-[protein] + H2O = L-seryl-[protein] + phosphate</text>
        <dbReference type="Rhea" id="RHEA:20629"/>
        <dbReference type="Rhea" id="RHEA-COMP:9863"/>
        <dbReference type="Rhea" id="RHEA-COMP:11604"/>
        <dbReference type="ChEBI" id="CHEBI:15377"/>
        <dbReference type="ChEBI" id="CHEBI:29999"/>
        <dbReference type="ChEBI" id="CHEBI:43474"/>
        <dbReference type="ChEBI" id="CHEBI:83421"/>
        <dbReference type="EC" id="3.1.3.16"/>
    </reaction>
    <physiologicalReaction direction="left-to-right" evidence="7">
        <dbReference type="Rhea" id="RHEA:20630"/>
    </physiologicalReaction>
</comment>
<comment type="catalytic activity">
    <reaction evidence="2">
        <text>O-phospho-L-threonyl-[protein] + H2O = L-threonyl-[protein] + phosphate</text>
        <dbReference type="Rhea" id="RHEA:47004"/>
        <dbReference type="Rhea" id="RHEA-COMP:11060"/>
        <dbReference type="Rhea" id="RHEA-COMP:11605"/>
        <dbReference type="ChEBI" id="CHEBI:15377"/>
        <dbReference type="ChEBI" id="CHEBI:30013"/>
        <dbReference type="ChEBI" id="CHEBI:43474"/>
        <dbReference type="ChEBI" id="CHEBI:61977"/>
        <dbReference type="EC" id="3.1.3.16"/>
    </reaction>
    <physiologicalReaction direction="left-to-right" evidence="2">
        <dbReference type="Rhea" id="RHEA:47005"/>
    </physiologicalReaction>
</comment>
<comment type="cofactor">
    <cofactor evidence="1">
        <name>Mg(2+)</name>
        <dbReference type="ChEBI" id="CHEBI:18420"/>
    </cofactor>
    <cofactor evidence="1">
        <name>Mn(2+)</name>
        <dbReference type="ChEBI" id="CHEBI:29035"/>
    </cofactor>
    <text evidence="3">Binds 2 magnesium or manganese ions per subunit.</text>
</comment>
<comment type="subcellular location">
    <subcellularLocation>
        <location evidence="2">Cytoplasm</location>
    </subcellularLocation>
    <subcellularLocation>
        <location evidence="2">Nucleus</location>
    </subcellularLocation>
</comment>
<comment type="disruption phenotype">
    <text evidence="5">Leads to increased phosphorylation of the HOG1-kinase sakA, and increased expression of genes positively regulated by the stress-activated p38MAPK cascade (PubMed:25597841). Leads to increased phosphorylation of the cell integrity MAPK cascade MAP kinase mpkA (PubMed:25597841). Alters the composition of cell wall constituents, and leads to impaired biofilm formation and increases sensitivity to the cell-wall stress inducers Calcofluor White and Congo Red (PubMed:25597841). Decreases virulence in a neutropenic murine model of invasive pulmonary aspergillosis (PubMed:25597841).</text>
</comment>
<comment type="similarity">
    <text evidence="7">Belongs to the PP2C family.</text>
</comment>
<protein>
    <recommendedName>
        <fullName evidence="7">Protein phosphatase 2C homolog 2</fullName>
        <shortName evidence="7">PP2C-2</shortName>
        <ecNumber evidence="2">3.1.3.16</ecNumber>
    </recommendedName>
</protein>
<gene>
    <name evidence="6" type="primary">ptcB</name>
    <name evidence="8" type="ORF">AFUA_1G09280</name>
</gene>
<reference evidence="9" key="1">
    <citation type="journal article" date="2005" name="Nature">
        <title>Genomic sequence of the pathogenic and allergenic filamentous fungus Aspergillus fumigatus.</title>
        <authorList>
            <person name="Nierman W.C."/>
            <person name="Pain A."/>
            <person name="Anderson M.J."/>
            <person name="Wortman J.R."/>
            <person name="Kim H.S."/>
            <person name="Arroyo J."/>
            <person name="Berriman M."/>
            <person name="Abe K."/>
            <person name="Archer D.B."/>
            <person name="Bermejo C."/>
            <person name="Bennett J.W."/>
            <person name="Bowyer P."/>
            <person name="Chen D."/>
            <person name="Collins M."/>
            <person name="Coulsen R."/>
            <person name="Davies R."/>
            <person name="Dyer P.S."/>
            <person name="Farman M.L."/>
            <person name="Fedorova N."/>
            <person name="Fedorova N.D."/>
            <person name="Feldblyum T.V."/>
            <person name="Fischer R."/>
            <person name="Fosker N."/>
            <person name="Fraser A."/>
            <person name="Garcia J.L."/>
            <person name="Garcia M.J."/>
            <person name="Goble A."/>
            <person name="Goldman G.H."/>
            <person name="Gomi K."/>
            <person name="Griffith-Jones S."/>
            <person name="Gwilliam R."/>
            <person name="Haas B.J."/>
            <person name="Haas H."/>
            <person name="Harris D.E."/>
            <person name="Horiuchi H."/>
            <person name="Huang J."/>
            <person name="Humphray S."/>
            <person name="Jimenez J."/>
            <person name="Keller N."/>
            <person name="Khouri H."/>
            <person name="Kitamoto K."/>
            <person name="Kobayashi T."/>
            <person name="Konzack S."/>
            <person name="Kulkarni R."/>
            <person name="Kumagai T."/>
            <person name="Lafton A."/>
            <person name="Latge J.-P."/>
            <person name="Li W."/>
            <person name="Lord A."/>
            <person name="Lu C."/>
            <person name="Majoros W.H."/>
            <person name="May G.S."/>
            <person name="Miller B.L."/>
            <person name="Mohamoud Y."/>
            <person name="Molina M."/>
            <person name="Monod M."/>
            <person name="Mouyna I."/>
            <person name="Mulligan S."/>
            <person name="Murphy L.D."/>
            <person name="O'Neil S."/>
            <person name="Paulsen I."/>
            <person name="Penalva M.A."/>
            <person name="Pertea M."/>
            <person name="Price C."/>
            <person name="Pritchard B.L."/>
            <person name="Quail M.A."/>
            <person name="Rabbinowitsch E."/>
            <person name="Rawlins N."/>
            <person name="Rajandream M.A."/>
            <person name="Reichard U."/>
            <person name="Renauld H."/>
            <person name="Robson G.D."/>
            <person name="Rodriguez de Cordoba S."/>
            <person name="Rodriguez-Pena J.M."/>
            <person name="Ronning C.M."/>
            <person name="Rutter S."/>
            <person name="Salzberg S.L."/>
            <person name="Sanchez M."/>
            <person name="Sanchez-Ferrero J.C."/>
            <person name="Saunders D."/>
            <person name="Seeger K."/>
            <person name="Squares R."/>
            <person name="Squares S."/>
            <person name="Takeuchi M."/>
            <person name="Tekaia F."/>
            <person name="Turner G."/>
            <person name="Vazquez de Aldana C.R."/>
            <person name="Weidman J."/>
            <person name="White O."/>
            <person name="Woodward J.R."/>
            <person name="Yu J.-H."/>
            <person name="Fraser C.M."/>
            <person name="Galagan J.E."/>
            <person name="Asai K."/>
            <person name="Machida M."/>
            <person name="Hall N."/>
            <person name="Barrell B.G."/>
            <person name="Denning D.W."/>
        </authorList>
    </citation>
    <scope>NUCLEOTIDE SEQUENCE [LARGE SCALE GENOMIC DNA]</scope>
    <source>
        <strain evidence="7">ATCC MYA-4609 / CBS 101355 / FGSC A1100 / Af293</strain>
    </source>
</reference>
<reference evidence="7" key="2">
    <citation type="journal article" date="2015" name="Mol. Microbiol.">
        <title>High osmolarity glycerol response PtcB phosphatase is important for Aspergillus fumigatus virulence.</title>
        <authorList>
            <person name="Winkelstroeter L.K."/>
            <person name="Bom V.L."/>
            <person name="de Castro P.A."/>
            <person name="Ramalho L.N."/>
            <person name="Goldman M.H."/>
            <person name="Brown N.A."/>
            <person name="Rajendran R."/>
            <person name="Ramage G."/>
            <person name="Bovier E."/>
            <person name="Dos Reis T.F."/>
            <person name="Savoldi M."/>
            <person name="Hagiwara D."/>
            <person name="Goldman G.H."/>
        </authorList>
    </citation>
    <scope>FUNCTION</scope>
    <scope>DISRUPTION PHENOTYPE</scope>
</reference>
<accession>Q4WTH5</accession>
<proteinExistence type="inferred from homology"/>
<keyword id="KW-0963">Cytoplasm</keyword>
<keyword id="KW-0378">Hydrolase</keyword>
<keyword id="KW-0464">Manganese</keyword>
<keyword id="KW-0479">Metal-binding</keyword>
<keyword id="KW-0539">Nucleus</keyword>
<keyword id="KW-0904">Protein phosphatase</keyword>
<keyword id="KW-1185">Reference proteome</keyword>
<organism evidence="9">
    <name type="scientific">Aspergillus fumigatus (strain ATCC MYA-4609 / CBS 101355 / FGSC A1100 / Af293)</name>
    <name type="common">Neosartorya fumigata</name>
    <dbReference type="NCBI Taxonomy" id="330879"/>
    <lineage>
        <taxon>Eukaryota</taxon>
        <taxon>Fungi</taxon>
        <taxon>Dikarya</taxon>
        <taxon>Ascomycota</taxon>
        <taxon>Pezizomycotina</taxon>
        <taxon>Eurotiomycetes</taxon>
        <taxon>Eurotiomycetidae</taxon>
        <taxon>Eurotiales</taxon>
        <taxon>Aspergillaceae</taxon>
        <taxon>Aspergillus</taxon>
        <taxon>Aspergillus subgen. Fumigati</taxon>
    </lineage>
</organism>
<dbReference type="EC" id="3.1.3.16" evidence="2"/>
<dbReference type="EMBL" id="AAHF01000004">
    <property type="protein sequence ID" value="EAL90257.1"/>
    <property type="molecule type" value="Genomic_DNA"/>
</dbReference>
<dbReference type="RefSeq" id="XP_752295.1">
    <property type="nucleotide sequence ID" value="XM_747202.1"/>
</dbReference>
<dbReference type="FunCoup" id="Q4WTH5">
    <property type="interactions" value="1417"/>
</dbReference>
<dbReference type="STRING" id="330879.Q4WTH5"/>
<dbReference type="EnsemblFungi" id="EAL90257">
    <property type="protein sequence ID" value="EAL90257"/>
    <property type="gene ID" value="AFUA_1G09280"/>
</dbReference>
<dbReference type="GeneID" id="3510371"/>
<dbReference type="KEGG" id="afm:AFUA_1G09280"/>
<dbReference type="VEuPathDB" id="FungiDB:Afu1g09280"/>
<dbReference type="eggNOG" id="KOG0698">
    <property type="taxonomic scope" value="Eukaryota"/>
</dbReference>
<dbReference type="HOGENOM" id="CLU_013173_4_3_1"/>
<dbReference type="InParanoid" id="Q4WTH5"/>
<dbReference type="OMA" id="GPGIRNQ"/>
<dbReference type="OrthoDB" id="10264738at2759"/>
<dbReference type="PHI-base" id="PHI:4471"/>
<dbReference type="Proteomes" id="UP000002530">
    <property type="component" value="Chromosome 1"/>
</dbReference>
<dbReference type="GO" id="GO:0005737">
    <property type="term" value="C:cytoplasm"/>
    <property type="evidence" value="ECO:0007669"/>
    <property type="project" value="UniProtKB-SubCell"/>
</dbReference>
<dbReference type="GO" id="GO:0005634">
    <property type="term" value="C:nucleus"/>
    <property type="evidence" value="ECO:0007669"/>
    <property type="project" value="UniProtKB-SubCell"/>
</dbReference>
<dbReference type="GO" id="GO:0046872">
    <property type="term" value="F:metal ion binding"/>
    <property type="evidence" value="ECO:0007669"/>
    <property type="project" value="UniProtKB-KW"/>
</dbReference>
<dbReference type="GO" id="GO:0004722">
    <property type="term" value="F:protein serine/threonine phosphatase activity"/>
    <property type="evidence" value="ECO:0007669"/>
    <property type="project" value="UniProtKB-EC"/>
</dbReference>
<dbReference type="GO" id="GO:0071470">
    <property type="term" value="P:cellular response to osmotic stress"/>
    <property type="evidence" value="ECO:0000315"/>
    <property type="project" value="AspGD"/>
</dbReference>
<dbReference type="GO" id="GO:0031505">
    <property type="term" value="P:fungal-type cell wall organization"/>
    <property type="evidence" value="ECO:0000315"/>
    <property type="project" value="AspGD"/>
</dbReference>
<dbReference type="GO" id="GO:0006470">
    <property type="term" value="P:protein dephosphorylation"/>
    <property type="evidence" value="ECO:0000315"/>
    <property type="project" value="UniProtKB"/>
</dbReference>
<dbReference type="GO" id="GO:0007165">
    <property type="term" value="P:signal transduction"/>
    <property type="evidence" value="ECO:0000318"/>
    <property type="project" value="GO_Central"/>
</dbReference>
<dbReference type="CDD" id="cd00143">
    <property type="entry name" value="PP2Cc"/>
    <property type="match status" value="1"/>
</dbReference>
<dbReference type="FunFam" id="3.60.40.10:FF:000016">
    <property type="entry name" value="Protein phosphatase 2C"/>
    <property type="match status" value="1"/>
</dbReference>
<dbReference type="Gene3D" id="3.60.40.10">
    <property type="entry name" value="PPM-type phosphatase domain"/>
    <property type="match status" value="1"/>
</dbReference>
<dbReference type="InterPro" id="IPR015655">
    <property type="entry name" value="PP2C"/>
</dbReference>
<dbReference type="InterPro" id="IPR000222">
    <property type="entry name" value="PP2C_BS"/>
</dbReference>
<dbReference type="InterPro" id="IPR036457">
    <property type="entry name" value="PPM-type-like_dom_sf"/>
</dbReference>
<dbReference type="InterPro" id="IPR001932">
    <property type="entry name" value="PPM-type_phosphatase-like_dom"/>
</dbReference>
<dbReference type="PANTHER" id="PTHR13832:SF565">
    <property type="entry name" value="AT28366P-RELATED"/>
    <property type="match status" value="1"/>
</dbReference>
<dbReference type="PANTHER" id="PTHR13832">
    <property type="entry name" value="PROTEIN PHOSPHATASE 2C"/>
    <property type="match status" value="1"/>
</dbReference>
<dbReference type="Pfam" id="PF00481">
    <property type="entry name" value="PP2C"/>
    <property type="match status" value="1"/>
</dbReference>
<dbReference type="SMART" id="SM00331">
    <property type="entry name" value="PP2C_SIG"/>
    <property type="match status" value="1"/>
</dbReference>
<dbReference type="SMART" id="SM00332">
    <property type="entry name" value="PP2Cc"/>
    <property type="match status" value="1"/>
</dbReference>
<dbReference type="SUPFAM" id="SSF81606">
    <property type="entry name" value="PP2C-like"/>
    <property type="match status" value="1"/>
</dbReference>
<dbReference type="PROSITE" id="PS01032">
    <property type="entry name" value="PPM_1"/>
    <property type="match status" value="1"/>
</dbReference>
<dbReference type="PROSITE" id="PS51746">
    <property type="entry name" value="PPM_2"/>
    <property type="match status" value="1"/>
</dbReference>